<reference key="1">
    <citation type="journal article" date="1970" name="Biochem. Genet.">
        <title>Production of hemoglobin C in the Moufflon (Ovis musimon Pallas, 1811) and the Barbary sheep (Ammotragus lervia Pallas, 1777) during experimental anemia: amino acid composition of tryptic peptides from the beta B and beta C chains.</title>
        <authorList>
            <person name="Wilson J.B."/>
            <person name="Miller A."/>
            <person name="Huisman T.H.J."/>
        </authorList>
    </citation>
    <scope>PARTIAL PROTEIN SEQUENCE</scope>
    <scope>AMINO-ACID COMPOSITION OF TRYPTIC PEPTIDES</scope>
</reference>
<gene>
    <name type="primary">HBBC</name>
</gene>
<feature type="chain" id="PRO_0000053045" description="Hemoglobin subunit beta-C">
    <location>
        <begin position="1"/>
        <end position="141"/>
    </location>
</feature>
<feature type="domain" description="Globin" evidence="1">
    <location>
        <begin position="1"/>
        <end position="141"/>
    </location>
</feature>
<feature type="binding site" description="distal binding residue">
    <location>
        <position position="58"/>
    </location>
    <ligand>
        <name>heme b</name>
        <dbReference type="ChEBI" id="CHEBI:60344"/>
    </ligand>
    <ligandPart>
        <name>Fe</name>
        <dbReference type="ChEBI" id="CHEBI:18248"/>
    </ligandPart>
</feature>
<feature type="binding site" description="proximal binding residue">
    <location>
        <position position="87"/>
    </location>
    <ligand>
        <name>heme b</name>
        <dbReference type="ChEBI" id="CHEBI:60344"/>
    </ligand>
    <ligandPart>
        <name>Fe</name>
        <dbReference type="ChEBI" id="CHEBI:18248"/>
    </ligandPart>
</feature>
<feature type="unsure residue">
    <location>
        <position position="64"/>
    </location>
</feature>
<feature type="unsure residue">
    <location>
        <position position="68"/>
    </location>
</feature>
<feature type="unsure residue">
    <location>
        <position position="71"/>
    </location>
</feature>
<feature type="unsure residue">
    <location>
        <begin position="74"/>
        <end position="75"/>
    </location>
</feature>
<feature type="unsure residue">
    <location>
        <position position="82"/>
    </location>
</feature>
<feature type="unsure residue">
    <location>
        <position position="85"/>
    </location>
</feature>
<feature type="unsure residue">
    <location>
        <position position="94"/>
    </location>
</feature>
<feature type="unsure residue">
    <location>
        <begin position="96"/>
        <end position="97"/>
    </location>
</feature>
<feature type="unsure residue">
    <location>
        <position position="103"/>
    </location>
</feature>
<sequence>PNKALITGFWSKVKVDEVGAEALGRLLVVYPWTQRFFEHFGDLSTADAVLGNAKVKAHGKKVLDSFSNGVQHLDDLKGTFAQLSELHCDKLHVDPENFRLLGNVLVVVLARHFGKEFTPELQAEFQKVVAGVASALAHRYH</sequence>
<dbReference type="PIR" id="A90232">
    <property type="entry name" value="HBMFC"/>
</dbReference>
<dbReference type="SMR" id="P68057"/>
<dbReference type="GO" id="GO:0072562">
    <property type="term" value="C:blood microparticle"/>
    <property type="evidence" value="ECO:0007669"/>
    <property type="project" value="TreeGrafter"/>
</dbReference>
<dbReference type="GO" id="GO:0031838">
    <property type="term" value="C:haptoglobin-hemoglobin complex"/>
    <property type="evidence" value="ECO:0007669"/>
    <property type="project" value="TreeGrafter"/>
</dbReference>
<dbReference type="GO" id="GO:0005833">
    <property type="term" value="C:hemoglobin complex"/>
    <property type="evidence" value="ECO:0007669"/>
    <property type="project" value="InterPro"/>
</dbReference>
<dbReference type="GO" id="GO:0031720">
    <property type="term" value="F:haptoglobin binding"/>
    <property type="evidence" value="ECO:0007669"/>
    <property type="project" value="TreeGrafter"/>
</dbReference>
<dbReference type="GO" id="GO:0020037">
    <property type="term" value="F:heme binding"/>
    <property type="evidence" value="ECO:0007669"/>
    <property type="project" value="InterPro"/>
</dbReference>
<dbReference type="GO" id="GO:0031721">
    <property type="term" value="F:hemoglobin alpha binding"/>
    <property type="evidence" value="ECO:0007669"/>
    <property type="project" value="TreeGrafter"/>
</dbReference>
<dbReference type="GO" id="GO:0046872">
    <property type="term" value="F:metal ion binding"/>
    <property type="evidence" value="ECO:0007669"/>
    <property type="project" value="UniProtKB-KW"/>
</dbReference>
<dbReference type="GO" id="GO:0043177">
    <property type="term" value="F:organic acid binding"/>
    <property type="evidence" value="ECO:0007669"/>
    <property type="project" value="TreeGrafter"/>
</dbReference>
<dbReference type="GO" id="GO:0019825">
    <property type="term" value="F:oxygen binding"/>
    <property type="evidence" value="ECO:0007669"/>
    <property type="project" value="InterPro"/>
</dbReference>
<dbReference type="GO" id="GO:0005344">
    <property type="term" value="F:oxygen carrier activity"/>
    <property type="evidence" value="ECO:0007669"/>
    <property type="project" value="UniProtKB-KW"/>
</dbReference>
<dbReference type="GO" id="GO:0004601">
    <property type="term" value="F:peroxidase activity"/>
    <property type="evidence" value="ECO:0007669"/>
    <property type="project" value="TreeGrafter"/>
</dbReference>
<dbReference type="GO" id="GO:0042744">
    <property type="term" value="P:hydrogen peroxide catabolic process"/>
    <property type="evidence" value="ECO:0007669"/>
    <property type="project" value="TreeGrafter"/>
</dbReference>
<dbReference type="CDD" id="cd08925">
    <property type="entry name" value="Hb-beta-like"/>
    <property type="match status" value="1"/>
</dbReference>
<dbReference type="FunFam" id="1.10.490.10:FF:000001">
    <property type="entry name" value="Hemoglobin subunit beta"/>
    <property type="match status" value="1"/>
</dbReference>
<dbReference type="Gene3D" id="1.10.490.10">
    <property type="entry name" value="Globins"/>
    <property type="match status" value="1"/>
</dbReference>
<dbReference type="InterPro" id="IPR000971">
    <property type="entry name" value="Globin"/>
</dbReference>
<dbReference type="InterPro" id="IPR009050">
    <property type="entry name" value="Globin-like_sf"/>
</dbReference>
<dbReference type="InterPro" id="IPR012292">
    <property type="entry name" value="Globin/Proto"/>
</dbReference>
<dbReference type="InterPro" id="IPR002337">
    <property type="entry name" value="Hemoglobin_b"/>
</dbReference>
<dbReference type="InterPro" id="IPR050056">
    <property type="entry name" value="Hemoglobin_oxygen_transport"/>
</dbReference>
<dbReference type="PANTHER" id="PTHR11442">
    <property type="entry name" value="HEMOGLOBIN FAMILY MEMBER"/>
    <property type="match status" value="1"/>
</dbReference>
<dbReference type="PANTHER" id="PTHR11442:SF42">
    <property type="entry name" value="HEMOGLOBIN SUBUNIT BETA"/>
    <property type="match status" value="1"/>
</dbReference>
<dbReference type="Pfam" id="PF00042">
    <property type="entry name" value="Globin"/>
    <property type="match status" value="1"/>
</dbReference>
<dbReference type="PRINTS" id="PR00814">
    <property type="entry name" value="BETAHAEM"/>
</dbReference>
<dbReference type="SUPFAM" id="SSF46458">
    <property type="entry name" value="Globin-like"/>
    <property type="match status" value="1"/>
</dbReference>
<dbReference type="PROSITE" id="PS01033">
    <property type="entry name" value="GLOBIN"/>
    <property type="match status" value="1"/>
</dbReference>
<comment type="function">
    <text>Involved in oxygen transport from the lung to the various peripheral tissues.</text>
</comment>
<comment type="subunit">
    <text>Heterotetramer of two alpha chains and two beta chains.</text>
</comment>
<comment type="tissue specificity">
    <text>Red blood cells.</text>
</comment>
<comment type="miscellaneous">
    <text>This type of beta-C chain is found when anemia has been experimentally produced.</text>
</comment>
<comment type="similarity">
    <text evidence="1">Belongs to the globin family.</text>
</comment>
<organism>
    <name type="scientific">Ovis aries musimon</name>
    <name type="common">Mouflon</name>
    <dbReference type="NCBI Taxonomy" id="9938"/>
    <lineage>
        <taxon>Eukaryota</taxon>
        <taxon>Metazoa</taxon>
        <taxon>Chordata</taxon>
        <taxon>Craniata</taxon>
        <taxon>Vertebrata</taxon>
        <taxon>Euteleostomi</taxon>
        <taxon>Mammalia</taxon>
        <taxon>Eutheria</taxon>
        <taxon>Laurasiatheria</taxon>
        <taxon>Artiodactyla</taxon>
        <taxon>Ruminantia</taxon>
        <taxon>Pecora</taxon>
        <taxon>Bovidae</taxon>
        <taxon>Caprinae</taxon>
        <taxon>Ovis</taxon>
    </lineage>
</organism>
<accession>P68057</accession>
<accession>P02079</accession>
<protein>
    <recommendedName>
        <fullName>Hemoglobin subunit beta-C</fullName>
    </recommendedName>
    <alternativeName>
        <fullName>Beta-C-globin</fullName>
    </alternativeName>
    <alternativeName>
        <fullName>Hemoglobin beta-C chain</fullName>
    </alternativeName>
</protein>
<evidence type="ECO:0000255" key="1">
    <source>
        <dbReference type="PROSITE-ProRule" id="PRU00238"/>
    </source>
</evidence>
<proteinExistence type="evidence at protein level"/>
<keyword id="KW-0903">Direct protein sequencing</keyword>
<keyword id="KW-0349">Heme</keyword>
<keyword id="KW-0408">Iron</keyword>
<keyword id="KW-0479">Metal-binding</keyword>
<keyword id="KW-0561">Oxygen transport</keyword>
<keyword id="KW-0813">Transport</keyword>
<name>HBBC_OVIMU</name>